<evidence type="ECO:0000255" key="1">
    <source>
        <dbReference type="HAMAP-Rule" id="MF_00093"/>
    </source>
</evidence>
<keyword id="KW-0963">Cytoplasm</keyword>
<keyword id="KW-0488">Methylation</keyword>
<keyword id="KW-0648">Protein biosynthesis</keyword>
<organism>
    <name type="scientific">Acinetobacter baumannii (strain AB307-0294)</name>
    <dbReference type="NCBI Taxonomy" id="557600"/>
    <lineage>
        <taxon>Bacteria</taxon>
        <taxon>Pseudomonadati</taxon>
        <taxon>Pseudomonadota</taxon>
        <taxon>Gammaproteobacteria</taxon>
        <taxon>Moraxellales</taxon>
        <taxon>Moraxellaceae</taxon>
        <taxon>Acinetobacter</taxon>
        <taxon>Acinetobacter calcoaceticus/baumannii complex</taxon>
    </lineage>
</organism>
<name>RF1_ACIB3</name>
<dbReference type="EMBL" id="CP001172">
    <property type="protein sequence ID" value="ACJ59331.1"/>
    <property type="molecule type" value="Genomic_DNA"/>
</dbReference>
<dbReference type="RefSeq" id="WP_000648007.1">
    <property type="nucleotide sequence ID" value="NZ_CP001172.1"/>
</dbReference>
<dbReference type="SMR" id="B7H0L9"/>
<dbReference type="HOGENOM" id="CLU_036856_0_1_6"/>
<dbReference type="Proteomes" id="UP000006924">
    <property type="component" value="Chromosome"/>
</dbReference>
<dbReference type="GO" id="GO:0005737">
    <property type="term" value="C:cytoplasm"/>
    <property type="evidence" value="ECO:0007669"/>
    <property type="project" value="UniProtKB-SubCell"/>
</dbReference>
<dbReference type="GO" id="GO:0016149">
    <property type="term" value="F:translation release factor activity, codon specific"/>
    <property type="evidence" value="ECO:0007669"/>
    <property type="project" value="UniProtKB-UniRule"/>
</dbReference>
<dbReference type="FunFam" id="3.30.160.20:FF:000004">
    <property type="entry name" value="Peptide chain release factor 1"/>
    <property type="match status" value="1"/>
</dbReference>
<dbReference type="FunFam" id="3.30.70.1660:FF:000002">
    <property type="entry name" value="Peptide chain release factor 1"/>
    <property type="match status" value="1"/>
</dbReference>
<dbReference type="FunFam" id="3.30.70.1660:FF:000004">
    <property type="entry name" value="Peptide chain release factor 1"/>
    <property type="match status" value="1"/>
</dbReference>
<dbReference type="Gene3D" id="3.30.160.20">
    <property type="match status" value="1"/>
</dbReference>
<dbReference type="Gene3D" id="3.30.70.1660">
    <property type="match status" value="1"/>
</dbReference>
<dbReference type="Gene3D" id="6.10.140.1950">
    <property type="match status" value="1"/>
</dbReference>
<dbReference type="HAMAP" id="MF_00093">
    <property type="entry name" value="Rel_fac_1"/>
    <property type="match status" value="1"/>
</dbReference>
<dbReference type="InterPro" id="IPR005139">
    <property type="entry name" value="PCRF"/>
</dbReference>
<dbReference type="InterPro" id="IPR000352">
    <property type="entry name" value="Pep_chain_release_fac_I"/>
</dbReference>
<dbReference type="InterPro" id="IPR045853">
    <property type="entry name" value="Pep_chain_release_fac_I_sf"/>
</dbReference>
<dbReference type="InterPro" id="IPR050057">
    <property type="entry name" value="Prokaryotic/Mito_RF"/>
</dbReference>
<dbReference type="InterPro" id="IPR004373">
    <property type="entry name" value="RF-1"/>
</dbReference>
<dbReference type="NCBIfam" id="TIGR00019">
    <property type="entry name" value="prfA"/>
    <property type="match status" value="1"/>
</dbReference>
<dbReference type="NCBIfam" id="NF001859">
    <property type="entry name" value="PRK00591.1"/>
    <property type="match status" value="1"/>
</dbReference>
<dbReference type="PANTHER" id="PTHR43804">
    <property type="entry name" value="LD18447P"/>
    <property type="match status" value="1"/>
</dbReference>
<dbReference type="PANTHER" id="PTHR43804:SF7">
    <property type="entry name" value="LD18447P"/>
    <property type="match status" value="1"/>
</dbReference>
<dbReference type="Pfam" id="PF03462">
    <property type="entry name" value="PCRF"/>
    <property type="match status" value="1"/>
</dbReference>
<dbReference type="Pfam" id="PF00472">
    <property type="entry name" value="RF-1"/>
    <property type="match status" value="1"/>
</dbReference>
<dbReference type="SMART" id="SM00937">
    <property type="entry name" value="PCRF"/>
    <property type="match status" value="1"/>
</dbReference>
<dbReference type="SUPFAM" id="SSF75620">
    <property type="entry name" value="Release factor"/>
    <property type="match status" value="1"/>
</dbReference>
<dbReference type="PROSITE" id="PS00745">
    <property type="entry name" value="RF_PROK_I"/>
    <property type="match status" value="1"/>
</dbReference>
<proteinExistence type="inferred from homology"/>
<protein>
    <recommendedName>
        <fullName evidence="1">Peptide chain release factor 1</fullName>
        <shortName evidence="1">RF-1</shortName>
    </recommendedName>
</protein>
<comment type="function">
    <text evidence="1">Peptide chain release factor 1 directs the termination of translation in response to the peptide chain termination codons UAG and UAA.</text>
</comment>
<comment type="subcellular location">
    <subcellularLocation>
        <location evidence="1">Cytoplasm</location>
    </subcellularLocation>
</comment>
<comment type="PTM">
    <text evidence="1">Methylated by PrmC. Methylation increases the termination efficiency of RF1.</text>
</comment>
<comment type="similarity">
    <text evidence="1">Belongs to the prokaryotic/mitochondrial release factor family.</text>
</comment>
<accession>B7H0L9</accession>
<feature type="chain" id="PRO_1000117229" description="Peptide chain release factor 1">
    <location>
        <begin position="1"/>
        <end position="362"/>
    </location>
</feature>
<feature type="modified residue" description="N5-methylglutamine" evidence="1">
    <location>
        <position position="235"/>
    </location>
</feature>
<gene>
    <name evidence="1" type="primary">prfA</name>
    <name type="ordered locus">ABBFA_001312</name>
</gene>
<sequence>MKASLRLRLDQLCDRHEELTALLADAEVISDNKRFRKLSREHSDLTEITEVWGKYRQAEEDIETAEMMKSDPDFKDMAEEEIQANKVLLEELESQLNILMIPKDPNDSNAAYLEIRAGTGGDEAAIFSGDLFRMYSKYAESQGWRIEVLSENEGEHGGFKEVICRVDGDGVYGRLKFESGAHRVQRVPATESQGRVHTSACTVAILPEIDVDTNVEINPADLRIDTYRASGAGGQHINKTDSAVRITHIPTGTVVECQEERSQHKNKAKAMALLVSRLENAKRAAADAATSEMRRDLVGSGDRSERIRTYNYPQGRMTDHRINLTLYKLDAIMEGDLTELLDSLHREYQADQLAMLAQENGG</sequence>
<reference key="1">
    <citation type="journal article" date="2008" name="J. Bacteriol.">
        <title>Comparative genome sequence analysis of multidrug-resistant Acinetobacter baumannii.</title>
        <authorList>
            <person name="Adams M.D."/>
            <person name="Goglin K."/>
            <person name="Molyneaux N."/>
            <person name="Hujer K.M."/>
            <person name="Lavender H."/>
            <person name="Jamison J.J."/>
            <person name="MacDonald I.J."/>
            <person name="Martin K.M."/>
            <person name="Russo T."/>
            <person name="Campagnari A.A."/>
            <person name="Hujer A.M."/>
            <person name="Bonomo R.A."/>
            <person name="Gill S.R."/>
        </authorList>
    </citation>
    <scope>NUCLEOTIDE SEQUENCE [LARGE SCALE GENOMIC DNA]</scope>
    <source>
        <strain>AB307-0294</strain>
    </source>
</reference>